<keyword id="KW-0002">3D-structure</keyword>
<keyword id="KW-0025">Alternative splicing</keyword>
<keyword id="KW-0175">Coiled coil</keyword>
<keyword id="KW-0176">Collagen</keyword>
<keyword id="KW-1015">Disulfide bond</keyword>
<keyword id="KW-0254">Endocytosis</keyword>
<keyword id="KW-0325">Glycoprotein</keyword>
<keyword id="KW-0427">LDL</keyword>
<keyword id="KW-0472">Membrane</keyword>
<keyword id="KW-0597">Phosphoprotein</keyword>
<keyword id="KW-0675">Receptor</keyword>
<keyword id="KW-1185">Reference proteome</keyword>
<keyword id="KW-0735">Signal-anchor</keyword>
<keyword id="KW-0812">Transmembrane</keyword>
<keyword id="KW-1133">Transmembrane helix</keyword>
<comment type="function">
    <text evidence="1">Membrane glycoproteins implicated in the pathologic deposition of cholesterol in arterial walls during atherogenesis. Two types of receptor subunits exist. These receptors mediate the endocytosis of a diverse group of macromolecules, including modified low density lipoproteins (LDL).</text>
</comment>
<comment type="subunit">
    <text evidence="1 5">Homotrimer (PubMed:8394868). Interacts with MYO18A (By similarity).</text>
</comment>
<comment type="subcellular location">
    <subcellularLocation>
        <location>Membrane</location>
        <topology>Single-pass type II membrane protein</topology>
    </subcellularLocation>
</comment>
<comment type="alternative products">
    <event type="alternative splicing"/>
    <isoform>
        <id>P30204-1</id>
        <name>I</name>
        <sequence type="displayed"/>
    </isoform>
    <isoform>
        <id>P30204-2</id>
        <name>II</name>
        <sequence type="described" ref="VSP_006231 VSP_006232"/>
    </isoform>
</comment>
<comment type="sequence caution" evidence="10">
    <conflict type="erroneous initiation">
        <sequence resource="EMBL-CDS" id="AAA39747"/>
    </conflict>
    <text>Truncated N-terminus.</text>
</comment>
<comment type="sequence caution" evidence="10">
    <conflict type="erroneous initiation">
        <sequence resource="EMBL-CDS" id="AAA39748"/>
    </conflict>
    <text>Truncated N-terminus.</text>
</comment>
<name>MSRE_MOUSE</name>
<evidence type="ECO:0000250" key="1">
    <source>
        <dbReference type="UniProtKB" id="P21757"/>
    </source>
</evidence>
<evidence type="ECO:0000255" key="2"/>
<evidence type="ECO:0000255" key="3">
    <source>
        <dbReference type="PROSITE-ProRule" id="PRU00196"/>
    </source>
</evidence>
<evidence type="ECO:0000256" key="4">
    <source>
        <dbReference type="SAM" id="MobiDB-lite"/>
    </source>
</evidence>
<evidence type="ECO:0000269" key="5">
    <source>
    </source>
</evidence>
<evidence type="ECO:0000303" key="6">
    <source>
    </source>
</evidence>
<evidence type="ECO:0000303" key="7">
    <source>
    </source>
</evidence>
<evidence type="ECO:0000303" key="8">
    <source>
    </source>
</evidence>
<evidence type="ECO:0000303" key="9">
    <source>
    </source>
</evidence>
<evidence type="ECO:0000305" key="10"/>
<evidence type="ECO:0007744" key="11">
    <source>
    </source>
</evidence>
<evidence type="ECO:0007829" key="12">
    <source>
        <dbReference type="PDB" id="6J02"/>
    </source>
</evidence>
<accession>P30204</accession>
<accession>E9QNQ5</accession>
<accession>Q923G0</accession>
<accession>Q9QZ56</accession>
<proteinExistence type="evidence at protein level"/>
<sequence>MTKEMTENQRLCPHEQEDADCSSESVKFDARSMTASLPHSTKNGPSLQEKLKSFKAALIALYLLVFAVLIPVVGIVTAQLLNWEMKNCLVCSLNTSDTSQGPMEKENTSKVEMRFTIIMEHMKDMEERIESISNSKADLIDTERFQNFSMATDQRLNDILLQLNSLISSVQEHGNSLDAISKSLQSLNMTLLDVQLHTETLNVRVRESTAKQQEDISKLEERVYKVSAEVQSVKEEQAHVEQEVKQEVRVLNNITNDLRLKDWEHSQTLKNITFIQGPPGPQGEKGDRGLTGQTGPPGAPGIRGIPGVKGDRGQIGFPGGRGNPGAPGKPGRSGSPGPKGQKGEKGSVGGSTPLKTVRLVGGSGAHEGRVEIFHQGQWGTICDDRWDIRAGQVVCRSLGYQEVLAVHKRAHFGQGTGPIWLNEVMCFGRESSIENCKINQWGVLSCSHSEDAGVTCTS</sequence>
<gene>
    <name type="primary">Msr1</name>
    <name type="synonym">Scvr</name>
</gene>
<dbReference type="EMBL" id="L04274">
    <property type="protein sequence ID" value="AAA39747.1"/>
    <property type="status" value="ALT_INIT"/>
    <property type="molecule type" value="mRNA"/>
</dbReference>
<dbReference type="EMBL" id="L04275">
    <property type="protein sequence ID" value="AAA39748.1"/>
    <property type="status" value="ALT_INIT"/>
    <property type="molecule type" value="mRNA"/>
</dbReference>
<dbReference type="EMBL" id="D13382">
    <property type="protein sequence ID" value="BAA02650.1"/>
    <property type="molecule type" value="mRNA"/>
</dbReference>
<dbReference type="EMBL" id="AF203781">
    <property type="protein sequence ID" value="AAF14001.1"/>
    <property type="molecule type" value="mRNA"/>
</dbReference>
<dbReference type="EMBL" id="M59445">
    <property type="protein sequence ID" value="AAA37464.1"/>
    <property type="molecule type" value="mRNA"/>
</dbReference>
<dbReference type="EMBL" id="M59446">
    <property type="protein sequence ID" value="AAA37465.1"/>
    <property type="molecule type" value="mRNA"/>
</dbReference>
<dbReference type="EMBL" id="U13873">
    <property type="protein sequence ID" value="AAC13774.1"/>
    <property type="molecule type" value="Genomic_DNA"/>
</dbReference>
<dbReference type="EMBL" id="AK089178">
    <property type="protein sequence ID" value="BAC40779.1"/>
    <property type="molecule type" value="mRNA"/>
</dbReference>
<dbReference type="EMBL" id="AC111028">
    <property type="status" value="NOT_ANNOTATED_CDS"/>
    <property type="molecule type" value="Genomic_DNA"/>
</dbReference>
<dbReference type="EMBL" id="BC003814">
    <property type="protein sequence ID" value="AAH03814.1"/>
    <property type="molecule type" value="mRNA"/>
</dbReference>
<dbReference type="PIR" id="B44407">
    <property type="entry name" value="B44407"/>
</dbReference>
<dbReference type="PIR" id="I73338">
    <property type="entry name" value="I73338"/>
</dbReference>
<dbReference type="RefSeq" id="NP_001106797.1">
    <property type="nucleotide sequence ID" value="NM_001113326.1"/>
</dbReference>
<dbReference type="PDB" id="6J02">
    <property type="method" value="X-ray"/>
    <property type="resolution" value="1.80 A"/>
    <property type="chains" value="A/B=350-458"/>
</dbReference>
<dbReference type="PDBsum" id="6J02"/>
<dbReference type="SMR" id="P30204"/>
<dbReference type="BioGRID" id="203114">
    <property type="interactions" value="3"/>
</dbReference>
<dbReference type="FunCoup" id="P30204">
    <property type="interactions" value="473"/>
</dbReference>
<dbReference type="IntAct" id="P30204">
    <property type="interactions" value="1"/>
</dbReference>
<dbReference type="STRING" id="10090.ENSMUSP00000026021"/>
<dbReference type="BindingDB" id="P30204"/>
<dbReference type="ChEMBL" id="CHEMBL4399"/>
<dbReference type="GlyCosmos" id="P30204">
    <property type="glycosylation" value="6 sites, No reported glycans"/>
</dbReference>
<dbReference type="GlyGen" id="P30204">
    <property type="glycosylation" value="7 sites, 3 N-linked glycans (3 sites), 1 O-linked glycan (1 site)"/>
</dbReference>
<dbReference type="iPTMnet" id="P30204"/>
<dbReference type="PhosphoSitePlus" id="P30204"/>
<dbReference type="jPOST" id="P30204"/>
<dbReference type="PaxDb" id="10090-ENSMUSP00000026021"/>
<dbReference type="PeptideAtlas" id="P30204"/>
<dbReference type="ProteomicsDB" id="291527">
    <molecule id="P30204-1"/>
</dbReference>
<dbReference type="ProteomicsDB" id="291528">
    <molecule id="P30204-2"/>
</dbReference>
<dbReference type="Antibodypedia" id="601">
    <property type="antibodies" value="948 antibodies from 40 providers"/>
</dbReference>
<dbReference type="DNASU" id="20288"/>
<dbReference type="Ensembl" id="ENSMUST00000026021.14">
    <molecule id="P30204-1"/>
    <property type="protein sequence ID" value="ENSMUSP00000026021.7"/>
    <property type="gene ID" value="ENSMUSG00000025044.17"/>
</dbReference>
<dbReference type="Ensembl" id="ENSMUST00000170091.3">
    <molecule id="P30204-2"/>
    <property type="protein sequence ID" value="ENSMUSP00000132535.2"/>
    <property type="gene ID" value="ENSMUSG00000025044.17"/>
</dbReference>
<dbReference type="GeneID" id="20288"/>
<dbReference type="KEGG" id="mmu:20288"/>
<dbReference type="UCSC" id="uc012gcm.1">
    <molecule id="P30204-1"/>
    <property type="organism name" value="mouse"/>
</dbReference>
<dbReference type="AGR" id="MGI:98257"/>
<dbReference type="CTD" id="4481"/>
<dbReference type="MGI" id="MGI:98257">
    <property type="gene designation" value="Msr1"/>
</dbReference>
<dbReference type="VEuPathDB" id="HostDB:ENSMUSG00000025044"/>
<dbReference type="eggNOG" id="ENOG502QUW0">
    <property type="taxonomic scope" value="Eukaryota"/>
</dbReference>
<dbReference type="GeneTree" id="ENSGT00950000183074"/>
<dbReference type="HOGENOM" id="CLU_041152_2_0_1"/>
<dbReference type="InParanoid" id="P30204"/>
<dbReference type="OMA" id="DDHWEIR"/>
<dbReference type="OrthoDB" id="536948at2759"/>
<dbReference type="PhylomeDB" id="P30204"/>
<dbReference type="TreeFam" id="TF330855"/>
<dbReference type="Reactome" id="R-MMU-3000480">
    <property type="pathway name" value="Scavenging by Class A Receptors"/>
</dbReference>
<dbReference type="BioGRID-ORCS" id="20288">
    <property type="hits" value="2 hits in 83 CRISPR screens"/>
</dbReference>
<dbReference type="ChiTaRS" id="Msr1">
    <property type="organism name" value="mouse"/>
</dbReference>
<dbReference type="PRO" id="PR:P30204"/>
<dbReference type="Proteomes" id="UP000000589">
    <property type="component" value="Chromosome 8"/>
</dbReference>
<dbReference type="RNAct" id="P30204">
    <property type="molecule type" value="protein"/>
</dbReference>
<dbReference type="Bgee" id="ENSMUSG00000025044">
    <property type="expression patterns" value="Expressed in stroma of bone marrow and 131 other cell types or tissues"/>
</dbReference>
<dbReference type="ExpressionAtlas" id="P30204">
    <property type="expression patterns" value="baseline and differential"/>
</dbReference>
<dbReference type="GO" id="GO:0005581">
    <property type="term" value="C:collagen trimer"/>
    <property type="evidence" value="ECO:0007669"/>
    <property type="project" value="UniProtKB-KW"/>
</dbReference>
<dbReference type="GO" id="GO:0034362">
    <property type="term" value="C:low-density lipoprotein particle"/>
    <property type="evidence" value="ECO:0007669"/>
    <property type="project" value="UniProtKB-KW"/>
</dbReference>
<dbReference type="GO" id="GO:0005886">
    <property type="term" value="C:plasma membrane"/>
    <property type="evidence" value="ECO:0000315"/>
    <property type="project" value="ARUK-UCL"/>
</dbReference>
<dbReference type="GO" id="GO:0001540">
    <property type="term" value="F:amyloid-beta binding"/>
    <property type="evidence" value="ECO:0000316"/>
    <property type="project" value="ARUK-UCL"/>
</dbReference>
<dbReference type="GO" id="GO:0038024">
    <property type="term" value="F:cargo receptor activity"/>
    <property type="evidence" value="ECO:0000316"/>
    <property type="project" value="ARUK-UCL"/>
</dbReference>
<dbReference type="GO" id="GO:0030169">
    <property type="term" value="F:low-density lipoprotein particle binding"/>
    <property type="evidence" value="ECO:0000315"/>
    <property type="project" value="BHF-UCL"/>
</dbReference>
<dbReference type="GO" id="GO:0005044">
    <property type="term" value="F:scavenger receptor activity"/>
    <property type="evidence" value="ECO:0007669"/>
    <property type="project" value="InterPro"/>
</dbReference>
<dbReference type="GO" id="GO:0097242">
    <property type="term" value="P:amyloid-beta clearance"/>
    <property type="evidence" value="ECO:0000315"/>
    <property type="project" value="ARUK-UCL"/>
</dbReference>
<dbReference type="GO" id="GO:0030301">
    <property type="term" value="P:cholesterol transport"/>
    <property type="evidence" value="ECO:0000315"/>
    <property type="project" value="BHF-UCL"/>
</dbReference>
<dbReference type="GO" id="GO:0051649">
    <property type="term" value="P:establishment of localization in cell"/>
    <property type="evidence" value="ECO:0000315"/>
    <property type="project" value="MGI"/>
</dbReference>
<dbReference type="GO" id="GO:0042953">
    <property type="term" value="P:lipoprotein transport"/>
    <property type="evidence" value="ECO:0000315"/>
    <property type="project" value="MGI"/>
</dbReference>
<dbReference type="GO" id="GO:0010629">
    <property type="term" value="P:negative regulation of gene expression"/>
    <property type="evidence" value="ECO:0000315"/>
    <property type="project" value="ARUK-UCL"/>
</dbReference>
<dbReference type="GO" id="GO:0006911">
    <property type="term" value="P:phagocytosis, engulfment"/>
    <property type="evidence" value="ECO:0000316"/>
    <property type="project" value="ARUK-UCL"/>
</dbReference>
<dbReference type="GO" id="GO:0034381">
    <property type="term" value="P:plasma lipoprotein particle clearance"/>
    <property type="evidence" value="ECO:0000315"/>
    <property type="project" value="BHF-UCL"/>
</dbReference>
<dbReference type="GO" id="GO:0010886">
    <property type="term" value="P:positive regulation of cholesterol storage"/>
    <property type="evidence" value="ECO:0000315"/>
    <property type="project" value="BHF-UCL"/>
</dbReference>
<dbReference type="GO" id="GO:0010744">
    <property type="term" value="P:positive regulation of macrophage derived foam cell differentiation"/>
    <property type="evidence" value="ECO:0000316"/>
    <property type="project" value="BHF-UCL"/>
</dbReference>
<dbReference type="GO" id="GO:0006898">
    <property type="term" value="P:receptor-mediated endocytosis"/>
    <property type="evidence" value="ECO:0000316"/>
    <property type="project" value="ARUK-UCL"/>
</dbReference>
<dbReference type="FunFam" id="3.10.250.10:FF:000011">
    <property type="entry name" value="Scavenger receptor class A member 5"/>
    <property type="match status" value="1"/>
</dbReference>
<dbReference type="Gene3D" id="3.10.250.10">
    <property type="entry name" value="SRCR-like domain"/>
    <property type="match status" value="1"/>
</dbReference>
<dbReference type="InterPro" id="IPR008160">
    <property type="entry name" value="Collagen"/>
</dbReference>
<dbReference type="InterPro" id="IPR003543">
    <property type="entry name" value="SR-AI/II"/>
</dbReference>
<dbReference type="InterPro" id="IPR001190">
    <property type="entry name" value="SRCR"/>
</dbReference>
<dbReference type="InterPro" id="IPR036772">
    <property type="entry name" value="SRCR-like_dom_sf"/>
</dbReference>
<dbReference type="PANTHER" id="PTHR48071:SF16">
    <property type="entry name" value="MACROPHAGE SCAVENGER RECEPTOR TYPES I AND II"/>
    <property type="match status" value="1"/>
</dbReference>
<dbReference type="PANTHER" id="PTHR48071">
    <property type="entry name" value="SRCR DOMAIN-CONTAINING PROTEIN"/>
    <property type="match status" value="1"/>
</dbReference>
<dbReference type="Pfam" id="PF01391">
    <property type="entry name" value="Collagen"/>
    <property type="match status" value="2"/>
</dbReference>
<dbReference type="Pfam" id="PF03523">
    <property type="entry name" value="Macscav_rec"/>
    <property type="match status" value="1"/>
</dbReference>
<dbReference type="Pfam" id="PF00530">
    <property type="entry name" value="SRCR"/>
    <property type="match status" value="1"/>
</dbReference>
<dbReference type="PRINTS" id="PR01408">
    <property type="entry name" value="MACSCAVRCPTR"/>
</dbReference>
<dbReference type="PRINTS" id="PR00258">
    <property type="entry name" value="SPERACTRCPTR"/>
</dbReference>
<dbReference type="SMART" id="SM00202">
    <property type="entry name" value="SR"/>
    <property type="match status" value="1"/>
</dbReference>
<dbReference type="SUPFAM" id="SSF56487">
    <property type="entry name" value="SRCR-like"/>
    <property type="match status" value="1"/>
</dbReference>
<dbReference type="PROSITE" id="PS00420">
    <property type="entry name" value="SRCR_1"/>
    <property type="match status" value="1"/>
</dbReference>
<dbReference type="PROSITE" id="PS50287">
    <property type="entry name" value="SRCR_2"/>
    <property type="match status" value="1"/>
</dbReference>
<feature type="chain" id="PRO_0000181628" description="Macrophage scavenger receptor types I and II">
    <location>
        <begin position="1"/>
        <end position="458"/>
    </location>
</feature>
<feature type="topological domain" description="Cytoplasmic" evidence="2">
    <location>
        <begin position="1"/>
        <end position="55"/>
    </location>
</feature>
<feature type="transmembrane region" description="Helical; Signal-anchor for type II membrane protein" evidence="2">
    <location>
        <begin position="56"/>
        <end position="78"/>
    </location>
</feature>
<feature type="topological domain" description="Extracellular" evidence="2">
    <location>
        <begin position="79"/>
        <end position="458"/>
    </location>
</feature>
<feature type="domain" description="Collagen-like">
    <location>
        <begin position="277"/>
        <end position="350"/>
    </location>
</feature>
<feature type="domain" description="SRCR" evidence="3">
    <location>
        <begin position="357"/>
        <end position="457"/>
    </location>
</feature>
<feature type="region of interest" description="Spacer" evidence="10">
    <location>
        <begin position="79"/>
        <end position="114"/>
    </location>
</feature>
<feature type="region of interest" description="Disordered" evidence="4">
    <location>
        <begin position="272"/>
        <end position="357"/>
    </location>
</feature>
<feature type="coiled-coil region" evidence="2">
    <location>
        <begin position="209"/>
        <end position="259"/>
    </location>
</feature>
<feature type="compositionally biased region" description="Gly residues" evidence="4">
    <location>
        <begin position="316"/>
        <end position="325"/>
    </location>
</feature>
<feature type="compositionally biased region" description="Low complexity" evidence="4">
    <location>
        <begin position="326"/>
        <end position="339"/>
    </location>
</feature>
<feature type="modified residue" description="Phosphoserine" evidence="11">
    <location>
        <position position="32"/>
    </location>
</feature>
<feature type="modified residue" description="Phosphoserine" evidence="11">
    <location>
        <position position="36"/>
    </location>
</feature>
<feature type="glycosylation site" description="N-linked (GlcNAc...) asparagine" evidence="2">
    <location>
        <position position="94"/>
    </location>
</feature>
<feature type="glycosylation site" description="N-linked (GlcNAc...) asparagine" evidence="2">
    <location>
        <position position="107"/>
    </location>
</feature>
<feature type="glycosylation site" description="N-linked (GlcNAc...) asparagine" evidence="2">
    <location>
        <position position="147"/>
    </location>
</feature>
<feature type="glycosylation site" description="N-linked (GlcNAc...) asparagine" evidence="2">
    <location>
        <position position="188"/>
    </location>
</feature>
<feature type="glycosylation site" description="N-linked (GlcNAc...) asparagine" evidence="2">
    <location>
        <position position="253"/>
    </location>
</feature>
<feature type="glycosylation site" description="N-linked (GlcNAc...) asparagine" evidence="2">
    <location>
        <position position="271"/>
    </location>
</feature>
<feature type="disulfide bond" evidence="3">
    <location>
        <begin position="382"/>
        <end position="446"/>
    </location>
</feature>
<feature type="disulfide bond" evidence="3">
    <location>
        <begin position="395"/>
        <end position="456"/>
    </location>
</feature>
<feature type="disulfide bond" evidence="3">
    <location>
        <begin position="426"/>
        <end position="436"/>
    </location>
</feature>
<feature type="splice variant" id="VSP_006231" description="In isoform II." evidence="6 7 8 9">
    <original>TPL</original>
    <variation>RSV</variation>
    <location>
        <begin position="352"/>
        <end position="354"/>
    </location>
</feature>
<feature type="splice variant" id="VSP_006232" description="In isoform II." evidence="6 7 8 9">
    <location>
        <begin position="355"/>
        <end position="458"/>
    </location>
</feature>
<feature type="sequence conflict" description="In Ref. 1; AAA39747/AAA39748, 2; BAA02650, 3; AAF14001, 4; BAC40779 and 6; AAH03814." evidence="10" ref="1 2 3 4 6">
    <original>Q</original>
    <variation>R</variation>
    <location>
        <position position="16"/>
    </location>
</feature>
<feature type="sequence conflict" description="In Ref. 1; AAA39747/AAA39748, 2; BAA02650, 4; BAC40779 and 6; AAH03814." evidence="10" ref="1 2 4 6">
    <original>L</original>
    <variation>V</variation>
    <location>
        <position position="47"/>
    </location>
</feature>
<feature type="sequence conflict" description="In Ref. 1; AAA39747/AAA39748, 2; BAA02650, 3; AAF14001, 4; BAC40779 and 6; AAH03814." evidence="10" ref="1 2 3 4 6">
    <original>L</original>
    <variation>R</variation>
    <location>
        <position position="93"/>
    </location>
</feature>
<feature type="sequence conflict" description="In Ref. 1; AAA39747/AAA39748, 2; BAA02650, 4; BAC40779 and 6; AAH03814." evidence="10" ref="1 2 4 6">
    <original>K</original>
    <variation>N</variation>
    <location>
        <position position="110"/>
    </location>
</feature>
<feature type="sequence conflict" description="In Ref. 1; AAA39747/AAA39748, 2; BAA02650, 4; BAC40779 and 6; AAH03814." evidence="10" ref="1 2 4 6">
    <original>E</original>
    <variation>A</variation>
    <location>
        <position position="120"/>
    </location>
</feature>
<feature type="sequence conflict" description="In Ref. 1; AAA39747/AAA39748, 2; BAA02650, 4; BAC40779 and 6; AAH03814." evidence="10" ref="1 2 4 6">
    <original>E</original>
    <variation>Q</variation>
    <location>
        <position position="130"/>
    </location>
</feature>
<feature type="sequence conflict" description="In Ref. 1; AAA39747/AAA39748, 2; BAA02650, 3; AAF14001, 4; BAC40779 and 6; AAH03814." evidence="10" ref="1 2 3 4 6">
    <original>E</original>
    <variation>G</variation>
    <location>
        <position position="143"/>
    </location>
</feature>
<feature type="sequence conflict" description="In Ref. 1; AAA39747/AAA39748, 2; BAA02650, 4; BAC40779 and 6; AAH03814." evidence="10" ref="1 2 4 6">
    <original>S</original>
    <variation>L</variation>
    <location>
        <position position="168"/>
    </location>
</feature>
<feature type="sequence conflict" description="In Ref. 1; AAA39747/AAA39748, 2; BAA02650, 4; BAC40779 and 6; AAH03814." evidence="10" ref="1 2 4 6">
    <original>N</original>
    <variation>H</variation>
    <location>
        <position position="202"/>
    </location>
</feature>
<feature type="strand" evidence="12">
    <location>
        <begin position="357"/>
        <end position="364"/>
    </location>
</feature>
<feature type="strand" evidence="12">
    <location>
        <begin position="367"/>
        <end position="374"/>
    </location>
</feature>
<feature type="strand" evidence="12">
    <location>
        <begin position="377"/>
        <end position="383"/>
    </location>
</feature>
<feature type="helix" evidence="12">
    <location>
        <begin position="388"/>
        <end position="397"/>
    </location>
</feature>
<feature type="strand" evidence="12">
    <location>
        <begin position="403"/>
        <end position="407"/>
    </location>
</feature>
<feature type="strand" evidence="12">
    <location>
        <begin position="419"/>
        <end position="425"/>
    </location>
</feature>
<feature type="helix" evidence="12">
    <location>
        <begin position="433"/>
        <end position="435"/>
    </location>
</feature>
<feature type="strand" evidence="12">
    <location>
        <begin position="436"/>
        <end position="439"/>
    </location>
</feature>
<feature type="helix" evidence="12">
    <location>
        <begin position="448"/>
        <end position="450"/>
    </location>
</feature>
<feature type="strand" evidence="12">
    <location>
        <begin position="453"/>
        <end position="456"/>
    </location>
</feature>
<organism>
    <name type="scientific">Mus musculus</name>
    <name type="common">Mouse</name>
    <dbReference type="NCBI Taxonomy" id="10090"/>
    <lineage>
        <taxon>Eukaryota</taxon>
        <taxon>Metazoa</taxon>
        <taxon>Chordata</taxon>
        <taxon>Craniata</taxon>
        <taxon>Vertebrata</taxon>
        <taxon>Euteleostomi</taxon>
        <taxon>Mammalia</taxon>
        <taxon>Eutheria</taxon>
        <taxon>Euarchontoglires</taxon>
        <taxon>Glires</taxon>
        <taxon>Rodentia</taxon>
        <taxon>Myomorpha</taxon>
        <taxon>Muroidea</taxon>
        <taxon>Muridae</taxon>
        <taxon>Murinae</taxon>
        <taxon>Mus</taxon>
        <taxon>Mus</taxon>
    </lineage>
</organism>
<protein>
    <recommendedName>
        <fullName>Macrophage scavenger receptor types I and II</fullName>
    </recommendedName>
    <alternativeName>
        <fullName>Macrophage acetylated LDL receptor I and II</fullName>
    </alternativeName>
    <alternativeName>
        <fullName>Scavenger receptor type A</fullName>
        <shortName>SR-A</shortName>
    </alternativeName>
    <cdAntigenName>CD204</cdAntigenName>
</protein>
<reference key="1">
    <citation type="journal article" date="1993" name="J. Lipid Res.">
        <title>Structures and high and low affinity ligand binding properties of murine type I and type II macrophage scavenger receptors.</title>
        <authorList>
            <person name="Ashkenas J."/>
            <person name="Penman M."/>
            <person name="Vasile E."/>
            <person name="Acton S."/>
            <person name="Freeman M.W."/>
            <person name="Krieger M."/>
        </authorList>
    </citation>
    <scope>NUCLEOTIDE SEQUENCE [MRNA] (ISOFORMS I AND II)</scope>
    <scope>SUBUNIT</scope>
</reference>
<reference key="2">
    <citation type="journal article" date="1993" name="J. Biol. Chem.">
        <title>Charged collagen structure mediates the recognition of negatively charged macromolecules by macrophage scavenger receptors.</title>
        <authorList>
            <person name="Doi T."/>
            <person name="Wada Y."/>
            <person name="Kodama T."/>
            <person name="Higashi K.I."/>
            <person name="Kurihara Y."/>
            <person name="Miyazaki T."/>
            <person name="Nakamura H."/>
            <person name="Uesugi S."/>
            <person name="Imanishi T."/>
            <person name="Kawabe Y."/>
            <person name="Itakura H."/>
            <person name="Yazaki Y."/>
            <person name="Matsumoto A."/>
        </authorList>
    </citation>
    <scope>NUCLEOTIDE SEQUENCE [MRNA] (ISOFORM II)</scope>
</reference>
<reference key="3">
    <citation type="submission" date="1999-11" db="EMBL/GenBank/DDBJ databases">
        <title>Identification of a functional domain in class A scavenger receptors that mediates metabolism of AcLDL.</title>
        <authorList>
            <person name="Rateri D.L."/>
            <person name="Whitman S.C."/>
            <person name="Block A.E."/>
            <person name="Daugherty A."/>
        </authorList>
    </citation>
    <scope>NUCLEOTIDE SEQUENCE (ISOFORM I)</scope>
    <source>
        <strain>C57BL/6J</strain>
    </source>
</reference>
<reference key="4">
    <citation type="journal article" date="2005" name="Science">
        <title>The transcriptional landscape of the mammalian genome.</title>
        <authorList>
            <person name="Carninci P."/>
            <person name="Kasukawa T."/>
            <person name="Katayama S."/>
            <person name="Gough J."/>
            <person name="Frith M.C."/>
            <person name="Maeda N."/>
            <person name="Oyama R."/>
            <person name="Ravasi T."/>
            <person name="Lenhard B."/>
            <person name="Wells C."/>
            <person name="Kodzius R."/>
            <person name="Shimokawa K."/>
            <person name="Bajic V.B."/>
            <person name="Brenner S.E."/>
            <person name="Batalov S."/>
            <person name="Forrest A.R."/>
            <person name="Zavolan M."/>
            <person name="Davis M.J."/>
            <person name="Wilming L.G."/>
            <person name="Aidinis V."/>
            <person name="Allen J.E."/>
            <person name="Ambesi-Impiombato A."/>
            <person name="Apweiler R."/>
            <person name="Aturaliya R.N."/>
            <person name="Bailey T.L."/>
            <person name="Bansal M."/>
            <person name="Baxter L."/>
            <person name="Beisel K.W."/>
            <person name="Bersano T."/>
            <person name="Bono H."/>
            <person name="Chalk A.M."/>
            <person name="Chiu K.P."/>
            <person name="Choudhary V."/>
            <person name="Christoffels A."/>
            <person name="Clutterbuck D.R."/>
            <person name="Crowe M.L."/>
            <person name="Dalla E."/>
            <person name="Dalrymple B.P."/>
            <person name="de Bono B."/>
            <person name="Della Gatta G."/>
            <person name="di Bernardo D."/>
            <person name="Down T."/>
            <person name="Engstrom P."/>
            <person name="Fagiolini M."/>
            <person name="Faulkner G."/>
            <person name="Fletcher C.F."/>
            <person name="Fukushima T."/>
            <person name="Furuno M."/>
            <person name="Futaki S."/>
            <person name="Gariboldi M."/>
            <person name="Georgii-Hemming P."/>
            <person name="Gingeras T.R."/>
            <person name="Gojobori T."/>
            <person name="Green R.E."/>
            <person name="Gustincich S."/>
            <person name="Harbers M."/>
            <person name="Hayashi Y."/>
            <person name="Hensch T.K."/>
            <person name="Hirokawa N."/>
            <person name="Hill D."/>
            <person name="Huminiecki L."/>
            <person name="Iacono M."/>
            <person name="Ikeo K."/>
            <person name="Iwama A."/>
            <person name="Ishikawa T."/>
            <person name="Jakt M."/>
            <person name="Kanapin A."/>
            <person name="Katoh M."/>
            <person name="Kawasawa Y."/>
            <person name="Kelso J."/>
            <person name="Kitamura H."/>
            <person name="Kitano H."/>
            <person name="Kollias G."/>
            <person name="Krishnan S.P."/>
            <person name="Kruger A."/>
            <person name="Kummerfeld S.K."/>
            <person name="Kurochkin I.V."/>
            <person name="Lareau L.F."/>
            <person name="Lazarevic D."/>
            <person name="Lipovich L."/>
            <person name="Liu J."/>
            <person name="Liuni S."/>
            <person name="McWilliam S."/>
            <person name="Madan Babu M."/>
            <person name="Madera M."/>
            <person name="Marchionni L."/>
            <person name="Matsuda H."/>
            <person name="Matsuzawa S."/>
            <person name="Miki H."/>
            <person name="Mignone F."/>
            <person name="Miyake S."/>
            <person name="Morris K."/>
            <person name="Mottagui-Tabar S."/>
            <person name="Mulder N."/>
            <person name="Nakano N."/>
            <person name="Nakauchi H."/>
            <person name="Ng P."/>
            <person name="Nilsson R."/>
            <person name="Nishiguchi S."/>
            <person name="Nishikawa S."/>
            <person name="Nori F."/>
            <person name="Ohara O."/>
            <person name="Okazaki Y."/>
            <person name="Orlando V."/>
            <person name="Pang K.C."/>
            <person name="Pavan W.J."/>
            <person name="Pavesi G."/>
            <person name="Pesole G."/>
            <person name="Petrovsky N."/>
            <person name="Piazza S."/>
            <person name="Reed J."/>
            <person name="Reid J.F."/>
            <person name="Ring B.Z."/>
            <person name="Ringwald M."/>
            <person name="Rost B."/>
            <person name="Ruan Y."/>
            <person name="Salzberg S.L."/>
            <person name="Sandelin A."/>
            <person name="Schneider C."/>
            <person name="Schoenbach C."/>
            <person name="Sekiguchi K."/>
            <person name="Semple C.A."/>
            <person name="Seno S."/>
            <person name="Sessa L."/>
            <person name="Sheng Y."/>
            <person name="Shibata Y."/>
            <person name="Shimada H."/>
            <person name="Shimada K."/>
            <person name="Silva D."/>
            <person name="Sinclair B."/>
            <person name="Sperling S."/>
            <person name="Stupka E."/>
            <person name="Sugiura K."/>
            <person name="Sultana R."/>
            <person name="Takenaka Y."/>
            <person name="Taki K."/>
            <person name="Tammoja K."/>
            <person name="Tan S.L."/>
            <person name="Tang S."/>
            <person name="Taylor M.S."/>
            <person name="Tegner J."/>
            <person name="Teichmann S.A."/>
            <person name="Ueda H.R."/>
            <person name="van Nimwegen E."/>
            <person name="Verardo R."/>
            <person name="Wei C.L."/>
            <person name="Yagi K."/>
            <person name="Yamanishi H."/>
            <person name="Zabarovsky E."/>
            <person name="Zhu S."/>
            <person name="Zimmer A."/>
            <person name="Hide W."/>
            <person name="Bult C."/>
            <person name="Grimmond S.M."/>
            <person name="Teasdale R.D."/>
            <person name="Liu E.T."/>
            <person name="Brusic V."/>
            <person name="Quackenbush J."/>
            <person name="Wahlestedt C."/>
            <person name="Mattick J.S."/>
            <person name="Hume D.A."/>
            <person name="Kai C."/>
            <person name="Sasaki D."/>
            <person name="Tomaru Y."/>
            <person name="Fukuda S."/>
            <person name="Kanamori-Katayama M."/>
            <person name="Suzuki M."/>
            <person name="Aoki J."/>
            <person name="Arakawa T."/>
            <person name="Iida J."/>
            <person name="Imamura K."/>
            <person name="Itoh M."/>
            <person name="Kato T."/>
            <person name="Kawaji H."/>
            <person name="Kawagashira N."/>
            <person name="Kawashima T."/>
            <person name="Kojima M."/>
            <person name="Kondo S."/>
            <person name="Konno H."/>
            <person name="Nakano K."/>
            <person name="Ninomiya N."/>
            <person name="Nishio T."/>
            <person name="Okada M."/>
            <person name="Plessy C."/>
            <person name="Shibata K."/>
            <person name="Shiraki T."/>
            <person name="Suzuki S."/>
            <person name="Tagami M."/>
            <person name="Waki K."/>
            <person name="Watahiki A."/>
            <person name="Okamura-Oho Y."/>
            <person name="Suzuki H."/>
            <person name="Kawai J."/>
            <person name="Hayashizaki Y."/>
        </authorList>
    </citation>
    <scope>NUCLEOTIDE SEQUENCE [LARGE SCALE MRNA] (ISOFORM II)</scope>
    <source>
        <strain>NOD</strain>
        <tissue>Thymus</tissue>
    </source>
</reference>
<reference key="5">
    <citation type="journal article" date="2009" name="PLoS Biol.">
        <title>Lineage-specific biology revealed by a finished genome assembly of the mouse.</title>
        <authorList>
            <person name="Church D.M."/>
            <person name="Goodstadt L."/>
            <person name="Hillier L.W."/>
            <person name="Zody M.C."/>
            <person name="Goldstein S."/>
            <person name="She X."/>
            <person name="Bult C.J."/>
            <person name="Agarwala R."/>
            <person name="Cherry J.L."/>
            <person name="DiCuccio M."/>
            <person name="Hlavina W."/>
            <person name="Kapustin Y."/>
            <person name="Meric P."/>
            <person name="Maglott D."/>
            <person name="Birtle Z."/>
            <person name="Marques A.C."/>
            <person name="Graves T."/>
            <person name="Zhou S."/>
            <person name="Teague B."/>
            <person name="Potamousis K."/>
            <person name="Churas C."/>
            <person name="Place M."/>
            <person name="Herschleb J."/>
            <person name="Runnheim R."/>
            <person name="Forrest D."/>
            <person name="Amos-Landgraf J."/>
            <person name="Schwartz D.C."/>
            <person name="Cheng Z."/>
            <person name="Lindblad-Toh K."/>
            <person name="Eichler E.E."/>
            <person name="Ponting C.P."/>
        </authorList>
    </citation>
    <scope>NUCLEOTIDE SEQUENCE [LARGE SCALE GENOMIC DNA]</scope>
    <source>
        <strain>C57BL/6J</strain>
    </source>
</reference>
<reference key="6">
    <citation type="journal article" date="2004" name="Genome Res.">
        <title>The status, quality, and expansion of the NIH full-length cDNA project: the Mammalian Gene Collection (MGC).</title>
        <authorList>
            <consortium name="The MGC Project Team"/>
        </authorList>
    </citation>
    <scope>NUCLEOTIDE SEQUENCE [LARGE SCALE MRNA] (ISOFORM II)</scope>
</reference>
<reference key="7">
    <citation type="journal article" date="1990" name="Proc. Natl. Acad. Sci. U.S.A.">
        <title>An ancient, highly conserved family of cysteine-rich protein domains revealed by cloning type I and type II murine macrophage scavenger receptors.</title>
        <authorList>
            <person name="Freeman M."/>
            <person name="Ashkenas J."/>
            <person name="Rees D.J."/>
            <person name="Kingsley D.M."/>
            <person name="Copeland N.G."/>
            <person name="Jenkins N.A."/>
            <person name="Krieger M."/>
        </authorList>
    </citation>
    <scope>NUCLEOTIDE SEQUENCE [MRNA] OF 349-458</scope>
</reference>
<reference key="8">
    <citation type="journal article" date="1995" name="J. Lipid Res.">
        <title>Structure of the murine macrophage scavenger receptor gene and evaluation of sequences that regulate expression in the macrophage cell line, P388D.</title>
        <authorList>
            <person name="Aftring R.P."/>
            <person name="Freeman M.W."/>
        </authorList>
    </citation>
    <scope>NUCLEOTIDE SEQUENCE [GENOMIC DNA] OF 1-4</scope>
</reference>
<reference key="9">
    <citation type="journal article" date="2009" name="Immunity">
        <title>The phagosomal proteome in interferon-gamma-activated macrophages.</title>
        <authorList>
            <person name="Trost M."/>
            <person name="English L."/>
            <person name="Lemieux S."/>
            <person name="Courcelles M."/>
            <person name="Desjardins M."/>
            <person name="Thibault P."/>
        </authorList>
    </citation>
    <scope>PHOSPHORYLATION [LARGE SCALE ANALYSIS] AT SER-32 AND SER-36</scope>
    <scope>IDENTIFICATION BY MASS SPECTROMETRY [LARGE SCALE ANALYSIS]</scope>
</reference>